<organism>
    <name type="scientific">Klebsiella aerogenes</name>
    <name type="common">Enterobacter aerogenes</name>
    <dbReference type="NCBI Taxonomy" id="548"/>
    <lineage>
        <taxon>Bacteria</taxon>
        <taxon>Pseudomonadati</taxon>
        <taxon>Pseudomonadota</taxon>
        <taxon>Gammaproteobacteria</taxon>
        <taxon>Enterobacterales</taxon>
        <taxon>Enterobacteriaceae</taxon>
        <taxon>Klebsiella/Raoultella group</taxon>
        <taxon>Klebsiella</taxon>
    </lineage>
</organism>
<feature type="chain" id="PRO_0000097206" description="Colanic acid capsular biosynthesis activation protein B">
    <location>
        <begin position="1"/>
        <end position="60"/>
    </location>
</feature>
<gene>
    <name type="primary">rcsB</name>
</gene>
<name>RCSB_KLEAE</name>
<sequence>MFQRIGFPGVTNFQVLLALASLIPTPASRDFFRLPLTVGFTGAEIVNIEFECLRQLTPGM</sequence>
<dbReference type="EMBL" id="M15749">
    <property type="protein sequence ID" value="AAA25143.1"/>
    <property type="molecule type" value="Genomic_DNA"/>
</dbReference>
<proteinExistence type="predicted"/>
<accession>P05339</accession>
<reference key="1">
    <citation type="journal article" date="1987" name="J. Gen. Microbiol.">
        <title>Isolation from Klebsiella and characterization of two rcs genes that activate colanic acid capsular biosynthesis in Escherichia coli.</title>
        <authorList>
            <person name="Allen P."/>
            <person name="Hart C.A."/>
            <person name="Saunders J.R."/>
        </authorList>
    </citation>
    <scope>NUCLEOTIDE SEQUENCE [GENOMIC DNA]</scope>
</reference>
<protein>
    <recommendedName>
        <fullName>Colanic acid capsular biosynthesis activation protein B</fullName>
    </recommendedName>
</protein>
<keyword id="KW-0972">Capsule biogenesis/degradation</keyword>
<keyword id="KW-0804">Transcription</keyword>
<keyword id="KW-0805">Transcription regulation</keyword>